<evidence type="ECO:0000255" key="1">
    <source>
        <dbReference type="HAMAP-Rule" id="MF_00171"/>
    </source>
</evidence>
<feature type="chain" id="PRO_0000057362" description="tRNA pseudouridine synthase A">
    <location>
        <begin position="1"/>
        <end position="262"/>
    </location>
</feature>
<feature type="active site" description="Nucleophile" evidence="1">
    <location>
        <position position="52"/>
    </location>
</feature>
<feature type="binding site" evidence="1">
    <location>
        <position position="110"/>
    </location>
    <ligand>
        <name>substrate</name>
    </ligand>
</feature>
<comment type="function">
    <text evidence="1">Formation of pseudouridine at positions 38, 39 and 40 in the anticodon stem and loop of transfer RNAs.</text>
</comment>
<comment type="catalytic activity">
    <reaction evidence="1">
        <text>uridine(38/39/40) in tRNA = pseudouridine(38/39/40) in tRNA</text>
        <dbReference type="Rhea" id="RHEA:22376"/>
        <dbReference type="Rhea" id="RHEA-COMP:10085"/>
        <dbReference type="Rhea" id="RHEA-COMP:10087"/>
        <dbReference type="ChEBI" id="CHEBI:65314"/>
        <dbReference type="ChEBI" id="CHEBI:65315"/>
        <dbReference type="EC" id="5.4.99.12"/>
    </reaction>
</comment>
<comment type="subunit">
    <text evidence="1">Homodimer.</text>
</comment>
<comment type="similarity">
    <text evidence="1">Belongs to the tRNA pseudouridine synthase TruA family.</text>
</comment>
<protein>
    <recommendedName>
        <fullName evidence="1">tRNA pseudouridine synthase A</fullName>
        <ecNumber evidence="1">5.4.99.12</ecNumber>
    </recommendedName>
    <alternativeName>
        <fullName evidence="1">tRNA pseudouridine(38-40) synthase</fullName>
    </alternativeName>
    <alternativeName>
        <fullName evidence="1">tRNA pseudouridylate synthase I</fullName>
    </alternativeName>
    <alternativeName>
        <fullName evidence="1">tRNA-uridine isomerase I</fullName>
    </alternativeName>
</protein>
<gene>
    <name evidence="1" type="primary">truA</name>
    <name type="ordered locus">CV_2764</name>
</gene>
<keyword id="KW-0413">Isomerase</keyword>
<keyword id="KW-1185">Reference proteome</keyword>
<keyword id="KW-0819">tRNA processing</keyword>
<sequence>MRIALGIEYDGRAFAGWQSQPHGNTVQDRLNRALGQIAGNRDVVTHAAGRTDAGVHAAMQVVHFDTDASRPLNAWVRGVNALLPPEVAVVWAREVGDDFHARFSAFSRSYSYFLLTHPVRSCLLAGKVGWYHQALDVAAMREAAAGLLGRHDFSSFRASECQAKSPVKDLQRLDIIEADGLLRFDLHADAFLHHMVRNIVGALLYVGKGALSPADMQSLLAARDRTSAPPTFMPDGLYLTGVGYPDEFSLPSRCEAARLRLR</sequence>
<proteinExistence type="inferred from homology"/>
<accession>Q7NUD6</accession>
<dbReference type="EC" id="5.4.99.12" evidence="1"/>
<dbReference type="EMBL" id="AE016825">
    <property type="protein sequence ID" value="AAQ60432.1"/>
    <property type="molecule type" value="Genomic_DNA"/>
</dbReference>
<dbReference type="RefSeq" id="WP_011136311.1">
    <property type="nucleotide sequence ID" value="NC_005085.1"/>
</dbReference>
<dbReference type="SMR" id="Q7NUD6"/>
<dbReference type="STRING" id="243365.CV_2764"/>
<dbReference type="KEGG" id="cvi:CV_2764"/>
<dbReference type="eggNOG" id="COG0101">
    <property type="taxonomic scope" value="Bacteria"/>
</dbReference>
<dbReference type="HOGENOM" id="CLU_014673_0_2_4"/>
<dbReference type="OrthoDB" id="9811823at2"/>
<dbReference type="Proteomes" id="UP000001424">
    <property type="component" value="Chromosome"/>
</dbReference>
<dbReference type="GO" id="GO:0003723">
    <property type="term" value="F:RNA binding"/>
    <property type="evidence" value="ECO:0007669"/>
    <property type="project" value="InterPro"/>
</dbReference>
<dbReference type="GO" id="GO:0160147">
    <property type="term" value="F:tRNA pseudouridine(38-40) synthase activity"/>
    <property type="evidence" value="ECO:0007669"/>
    <property type="project" value="UniProtKB-EC"/>
</dbReference>
<dbReference type="GO" id="GO:0031119">
    <property type="term" value="P:tRNA pseudouridine synthesis"/>
    <property type="evidence" value="ECO:0007669"/>
    <property type="project" value="UniProtKB-UniRule"/>
</dbReference>
<dbReference type="CDD" id="cd02570">
    <property type="entry name" value="PseudoU_synth_EcTruA"/>
    <property type="match status" value="1"/>
</dbReference>
<dbReference type="FunFam" id="3.30.70.580:FF:000001">
    <property type="entry name" value="tRNA pseudouridine synthase A"/>
    <property type="match status" value="1"/>
</dbReference>
<dbReference type="Gene3D" id="3.30.70.660">
    <property type="entry name" value="Pseudouridine synthase I, catalytic domain, C-terminal subdomain"/>
    <property type="match status" value="1"/>
</dbReference>
<dbReference type="Gene3D" id="3.30.70.580">
    <property type="entry name" value="Pseudouridine synthase I, catalytic domain, N-terminal subdomain"/>
    <property type="match status" value="1"/>
</dbReference>
<dbReference type="HAMAP" id="MF_00171">
    <property type="entry name" value="TruA"/>
    <property type="match status" value="1"/>
</dbReference>
<dbReference type="InterPro" id="IPR020103">
    <property type="entry name" value="PsdUridine_synth_cat_dom_sf"/>
</dbReference>
<dbReference type="InterPro" id="IPR001406">
    <property type="entry name" value="PsdUridine_synth_TruA"/>
</dbReference>
<dbReference type="InterPro" id="IPR020097">
    <property type="entry name" value="PsdUridine_synth_TruA_a/b_dom"/>
</dbReference>
<dbReference type="InterPro" id="IPR020095">
    <property type="entry name" value="PsdUridine_synth_TruA_C"/>
</dbReference>
<dbReference type="InterPro" id="IPR020094">
    <property type="entry name" value="TruA/RsuA/RluB/E/F_N"/>
</dbReference>
<dbReference type="NCBIfam" id="TIGR00071">
    <property type="entry name" value="hisT_truA"/>
    <property type="match status" value="1"/>
</dbReference>
<dbReference type="PANTHER" id="PTHR11142">
    <property type="entry name" value="PSEUDOURIDYLATE SYNTHASE"/>
    <property type="match status" value="1"/>
</dbReference>
<dbReference type="PANTHER" id="PTHR11142:SF0">
    <property type="entry name" value="TRNA PSEUDOURIDINE SYNTHASE-LIKE 1"/>
    <property type="match status" value="1"/>
</dbReference>
<dbReference type="Pfam" id="PF01416">
    <property type="entry name" value="PseudoU_synth_1"/>
    <property type="match status" value="2"/>
</dbReference>
<dbReference type="PIRSF" id="PIRSF001430">
    <property type="entry name" value="tRNA_psdUrid_synth"/>
    <property type="match status" value="1"/>
</dbReference>
<dbReference type="SUPFAM" id="SSF55120">
    <property type="entry name" value="Pseudouridine synthase"/>
    <property type="match status" value="1"/>
</dbReference>
<reference key="1">
    <citation type="journal article" date="2003" name="Proc. Natl. Acad. Sci. U.S.A.">
        <title>The complete genome sequence of Chromobacterium violaceum reveals remarkable and exploitable bacterial adaptability.</title>
        <authorList>
            <person name="Vasconcelos A.T.R."/>
            <person name="de Almeida D.F."/>
            <person name="Hungria M."/>
            <person name="Guimaraes C.T."/>
            <person name="Antonio R.V."/>
            <person name="Almeida F.C."/>
            <person name="de Almeida L.G.P."/>
            <person name="de Almeida R."/>
            <person name="Alves-Gomes J.A."/>
            <person name="Andrade E.M."/>
            <person name="Araripe J."/>
            <person name="de Araujo M.F.F."/>
            <person name="Astolfi-Filho S."/>
            <person name="Azevedo V."/>
            <person name="Baptista A.J."/>
            <person name="Bataus L.A.M."/>
            <person name="Batista J.S."/>
            <person name="Belo A."/>
            <person name="van den Berg C."/>
            <person name="Bogo M."/>
            <person name="Bonatto S."/>
            <person name="Bordignon J."/>
            <person name="Brigido M.M."/>
            <person name="Brito C.A."/>
            <person name="Brocchi M."/>
            <person name="Burity H.A."/>
            <person name="Camargo A.A."/>
            <person name="Cardoso D.D.P."/>
            <person name="Carneiro N.P."/>
            <person name="Carraro D.M."/>
            <person name="Carvalho C.M.B."/>
            <person name="Cascardo J.C.M."/>
            <person name="Cavada B.S."/>
            <person name="Chueire L.M.O."/>
            <person name="Creczynski-Pasa T.B."/>
            <person name="Cunha-Junior N.C."/>
            <person name="Fagundes N."/>
            <person name="Falcao C.L."/>
            <person name="Fantinatti F."/>
            <person name="Farias I.P."/>
            <person name="Felipe M.S.S."/>
            <person name="Ferrari L.P."/>
            <person name="Ferro J.A."/>
            <person name="Ferro M.I.T."/>
            <person name="Franco G.R."/>
            <person name="Freitas N.S.A."/>
            <person name="Furlan L.R."/>
            <person name="Gazzinelli R.T."/>
            <person name="Gomes E.A."/>
            <person name="Goncalves P.R."/>
            <person name="Grangeiro T.B."/>
            <person name="Grattapaglia D."/>
            <person name="Grisard E.C."/>
            <person name="Hanna E.S."/>
            <person name="Jardim S.N."/>
            <person name="Laurino J."/>
            <person name="Leoi L.C.T."/>
            <person name="Lima L.F.A."/>
            <person name="Loureiro M.F."/>
            <person name="Lyra M.C.C.P."/>
            <person name="Madeira H.M.F."/>
            <person name="Manfio G.P."/>
            <person name="Maranhao A.Q."/>
            <person name="Martins W.S."/>
            <person name="di Mauro S.M.Z."/>
            <person name="de Medeiros S.R.B."/>
            <person name="Meissner R.V."/>
            <person name="Moreira M.A.M."/>
            <person name="Nascimento F.F."/>
            <person name="Nicolas M.F."/>
            <person name="Oliveira J.G."/>
            <person name="Oliveira S.C."/>
            <person name="Paixao R.F.C."/>
            <person name="Parente J.A."/>
            <person name="Pedrosa F.O."/>
            <person name="Pena S.D.J."/>
            <person name="Pereira J.O."/>
            <person name="Pereira M."/>
            <person name="Pinto L.S.R.C."/>
            <person name="Pinto L.S."/>
            <person name="Porto J.I.R."/>
            <person name="Potrich D.P."/>
            <person name="Ramalho-Neto C.E."/>
            <person name="Reis A.M.M."/>
            <person name="Rigo L.U."/>
            <person name="Rondinelli E."/>
            <person name="Santos E.B.P."/>
            <person name="Santos F.R."/>
            <person name="Schneider M.P.C."/>
            <person name="Seuanez H.N."/>
            <person name="Silva A.M.R."/>
            <person name="da Silva A.L.C."/>
            <person name="Silva D.W."/>
            <person name="Silva R."/>
            <person name="Simoes I.C."/>
            <person name="Simon D."/>
            <person name="Soares C.M.A."/>
            <person name="Soares R.B.A."/>
            <person name="Souza E.M."/>
            <person name="Souza K.R.L."/>
            <person name="Souza R.C."/>
            <person name="Steffens M.B.R."/>
            <person name="Steindel M."/>
            <person name="Teixeira S.R."/>
            <person name="Urmenyi T."/>
            <person name="Vettore A."/>
            <person name="Wassem R."/>
            <person name="Zaha A."/>
            <person name="Simpson A.J.G."/>
        </authorList>
    </citation>
    <scope>NUCLEOTIDE SEQUENCE [LARGE SCALE GENOMIC DNA]</scope>
    <source>
        <strain>ATCC 12472 / DSM 30191 / JCM 1249 / CCUG 213 / NBRC 12614 / NCIMB 9131 / NCTC 9757 / MK</strain>
    </source>
</reference>
<name>TRUA_CHRVO</name>
<organism>
    <name type="scientific">Chromobacterium violaceum (strain ATCC 12472 / DSM 30191 / JCM 1249 / CCUG 213 / NBRC 12614 / NCIMB 9131 / NCTC 9757 / MK)</name>
    <dbReference type="NCBI Taxonomy" id="243365"/>
    <lineage>
        <taxon>Bacteria</taxon>
        <taxon>Pseudomonadati</taxon>
        <taxon>Pseudomonadota</taxon>
        <taxon>Betaproteobacteria</taxon>
        <taxon>Neisseriales</taxon>
        <taxon>Chromobacteriaceae</taxon>
        <taxon>Chromobacterium</taxon>
    </lineage>
</organism>